<accession>A0LSR0</accession>
<keyword id="KW-0067">ATP-binding</keyword>
<keyword id="KW-0436">Ligase</keyword>
<keyword id="KW-0547">Nucleotide-binding</keyword>
<keyword id="KW-0648">Protein biosynthesis</keyword>
<keyword id="KW-1185">Reference proteome</keyword>
<evidence type="ECO:0000255" key="1">
    <source>
        <dbReference type="HAMAP-Rule" id="MF_00120"/>
    </source>
</evidence>
<proteinExistence type="inferred from homology"/>
<comment type="function">
    <text evidence="1">Allows the formation of correctly charged Gln-tRNA(Gln) through the transamidation of misacylated Glu-tRNA(Gln) in organisms which lack glutaminyl-tRNA synthetase. The reaction takes place in the presence of glutamine and ATP through an activated gamma-phospho-Glu-tRNA(Gln).</text>
</comment>
<comment type="catalytic activity">
    <reaction evidence="1">
        <text>L-glutamyl-tRNA(Gln) + L-glutamine + ATP + H2O = L-glutaminyl-tRNA(Gln) + L-glutamate + ADP + phosphate + H(+)</text>
        <dbReference type="Rhea" id="RHEA:17521"/>
        <dbReference type="Rhea" id="RHEA-COMP:9681"/>
        <dbReference type="Rhea" id="RHEA-COMP:9684"/>
        <dbReference type="ChEBI" id="CHEBI:15377"/>
        <dbReference type="ChEBI" id="CHEBI:15378"/>
        <dbReference type="ChEBI" id="CHEBI:29985"/>
        <dbReference type="ChEBI" id="CHEBI:30616"/>
        <dbReference type="ChEBI" id="CHEBI:43474"/>
        <dbReference type="ChEBI" id="CHEBI:58359"/>
        <dbReference type="ChEBI" id="CHEBI:78520"/>
        <dbReference type="ChEBI" id="CHEBI:78521"/>
        <dbReference type="ChEBI" id="CHEBI:456216"/>
        <dbReference type="EC" id="6.3.5.7"/>
    </reaction>
</comment>
<comment type="subunit">
    <text evidence="1">Heterotrimer of A, B and C subunits.</text>
</comment>
<comment type="similarity">
    <text evidence="1">Belongs to the amidase family. GatA subfamily.</text>
</comment>
<name>GATA_ACIC1</name>
<gene>
    <name evidence="1" type="primary">gatA</name>
    <name type="ordered locus">Acel_0697</name>
</gene>
<protein>
    <recommendedName>
        <fullName evidence="1">Glutamyl-tRNA(Gln) amidotransferase subunit A</fullName>
        <shortName evidence="1">Glu-ADT subunit A</shortName>
        <ecNumber evidence="1">6.3.5.7</ecNumber>
    </recommendedName>
</protein>
<feature type="chain" id="PRO_1000015794" description="Glutamyl-tRNA(Gln) amidotransferase subunit A">
    <location>
        <begin position="1"/>
        <end position="505"/>
    </location>
</feature>
<feature type="active site" description="Charge relay system" evidence="1">
    <location>
        <position position="80"/>
    </location>
</feature>
<feature type="active site" description="Charge relay system" evidence="1">
    <location>
        <position position="155"/>
    </location>
</feature>
<feature type="active site" description="Acyl-ester intermediate" evidence="1">
    <location>
        <position position="179"/>
    </location>
</feature>
<organism>
    <name type="scientific">Acidothermus cellulolyticus (strain ATCC 43068 / DSM 8971 / 11B)</name>
    <dbReference type="NCBI Taxonomy" id="351607"/>
    <lineage>
        <taxon>Bacteria</taxon>
        <taxon>Bacillati</taxon>
        <taxon>Actinomycetota</taxon>
        <taxon>Actinomycetes</taxon>
        <taxon>Acidothermales</taxon>
        <taxon>Acidothermaceae</taxon>
        <taxon>Acidothermus</taxon>
    </lineage>
</organism>
<reference key="1">
    <citation type="journal article" date="2009" name="Genome Res.">
        <title>Complete genome of the cellulolytic thermophile Acidothermus cellulolyticus 11B provides insights into its ecophysiological and evolutionary adaptations.</title>
        <authorList>
            <person name="Barabote R.D."/>
            <person name="Xie G."/>
            <person name="Leu D.H."/>
            <person name="Normand P."/>
            <person name="Necsulea A."/>
            <person name="Daubin V."/>
            <person name="Medigue C."/>
            <person name="Adney W.S."/>
            <person name="Xu X.C."/>
            <person name="Lapidus A."/>
            <person name="Parales R.E."/>
            <person name="Detter C."/>
            <person name="Pujic P."/>
            <person name="Bruce D."/>
            <person name="Lavire C."/>
            <person name="Challacombe J.F."/>
            <person name="Brettin T.S."/>
            <person name="Berry A.M."/>
        </authorList>
    </citation>
    <scope>NUCLEOTIDE SEQUENCE [LARGE SCALE GENOMIC DNA]</scope>
    <source>
        <strain>ATCC 43068 / DSM 8971 / 11B</strain>
    </source>
</reference>
<dbReference type="EC" id="6.3.5.7" evidence="1"/>
<dbReference type="EMBL" id="CP000481">
    <property type="protein sequence ID" value="ABK52470.1"/>
    <property type="molecule type" value="Genomic_DNA"/>
</dbReference>
<dbReference type="RefSeq" id="WP_011719533.1">
    <property type="nucleotide sequence ID" value="NC_008578.1"/>
</dbReference>
<dbReference type="SMR" id="A0LSR0"/>
<dbReference type="FunCoup" id="A0LSR0">
    <property type="interactions" value="284"/>
</dbReference>
<dbReference type="STRING" id="351607.Acel_0697"/>
<dbReference type="KEGG" id="ace:Acel_0697"/>
<dbReference type="eggNOG" id="COG0154">
    <property type="taxonomic scope" value="Bacteria"/>
</dbReference>
<dbReference type="HOGENOM" id="CLU_009600_0_3_11"/>
<dbReference type="InParanoid" id="A0LSR0"/>
<dbReference type="OrthoDB" id="9811471at2"/>
<dbReference type="Proteomes" id="UP000008221">
    <property type="component" value="Chromosome"/>
</dbReference>
<dbReference type="GO" id="GO:0030956">
    <property type="term" value="C:glutamyl-tRNA(Gln) amidotransferase complex"/>
    <property type="evidence" value="ECO:0007669"/>
    <property type="project" value="InterPro"/>
</dbReference>
<dbReference type="GO" id="GO:0005524">
    <property type="term" value="F:ATP binding"/>
    <property type="evidence" value="ECO:0007669"/>
    <property type="project" value="UniProtKB-KW"/>
</dbReference>
<dbReference type="GO" id="GO:0050567">
    <property type="term" value="F:glutaminyl-tRNA synthase (glutamine-hydrolyzing) activity"/>
    <property type="evidence" value="ECO:0007669"/>
    <property type="project" value="UniProtKB-UniRule"/>
</dbReference>
<dbReference type="GO" id="GO:0006412">
    <property type="term" value="P:translation"/>
    <property type="evidence" value="ECO:0007669"/>
    <property type="project" value="UniProtKB-UniRule"/>
</dbReference>
<dbReference type="Gene3D" id="3.90.1300.10">
    <property type="entry name" value="Amidase signature (AS) domain"/>
    <property type="match status" value="1"/>
</dbReference>
<dbReference type="HAMAP" id="MF_00120">
    <property type="entry name" value="GatA"/>
    <property type="match status" value="1"/>
</dbReference>
<dbReference type="InterPro" id="IPR000120">
    <property type="entry name" value="Amidase"/>
</dbReference>
<dbReference type="InterPro" id="IPR020556">
    <property type="entry name" value="Amidase_CS"/>
</dbReference>
<dbReference type="InterPro" id="IPR023631">
    <property type="entry name" value="Amidase_dom"/>
</dbReference>
<dbReference type="InterPro" id="IPR036928">
    <property type="entry name" value="AS_sf"/>
</dbReference>
<dbReference type="InterPro" id="IPR004412">
    <property type="entry name" value="GatA"/>
</dbReference>
<dbReference type="NCBIfam" id="TIGR00132">
    <property type="entry name" value="gatA"/>
    <property type="match status" value="1"/>
</dbReference>
<dbReference type="PANTHER" id="PTHR11895:SF151">
    <property type="entry name" value="GLUTAMYL-TRNA(GLN) AMIDOTRANSFERASE SUBUNIT A"/>
    <property type="match status" value="1"/>
</dbReference>
<dbReference type="PANTHER" id="PTHR11895">
    <property type="entry name" value="TRANSAMIDASE"/>
    <property type="match status" value="1"/>
</dbReference>
<dbReference type="Pfam" id="PF01425">
    <property type="entry name" value="Amidase"/>
    <property type="match status" value="1"/>
</dbReference>
<dbReference type="SUPFAM" id="SSF75304">
    <property type="entry name" value="Amidase signature (AS) enzymes"/>
    <property type="match status" value="1"/>
</dbReference>
<dbReference type="PROSITE" id="PS00571">
    <property type="entry name" value="AMIDASES"/>
    <property type="match status" value="1"/>
</dbReference>
<sequence>MSDLIRRTAVELAAMIAAREVSAEEVTRAHLDRIAAVDPAVHAFLYVDADGALTAARAVDARLAAGERLGPLAGVPLALKDVFTTRGMPTTCGSKILEGWIPPYDATVVQKIRDAGIVILGKTNMDEFAMGSSTENSAFGPTRNPWDLSRIPGGSSGGSAAAVAAFEAPLAIGTDTGGSIRQPAAVTGIVGTKPTYGGVSRYGLVAFSSSLDQAGPFARTVLDAAYLHAAIAGHDPRDATSIDAPVPDVVAAARNGDVRGLRIGVVRELDGDGYDPGVRHQFHQAVKLLADLGADVGEVSCPHFEYALAAYYLIAPSECSSNLARFDAMRYGLRLGDDGTRTAEDVMALTRAAGFGAEVKRRIMLGTYALSSGYYEAYYGSAQKVRTLIIQDFAAAFEKFDVLISPTTPTTAFPLGERVDDPLKMYLADLDTIPVNLAGNAAMSVPIGCSPDDGLPVGLQIMAPVLADDRLYRVGAALEAAYRERTGRLLIEDVPDPAANQEGAA</sequence>